<comment type="function">
    <text evidence="3 4">Transcriptional activator of part of the trichothecene biosynthesis cluster that mediates the production of the antimicrobial trichothecene harzianum A (HA) that plays a role in Botrytis cinerea antagonistic activity and plant defense priming (PubMed:21642405, PubMed:30121242). Regulates expression of both trichothecene and mevalonate pathway genes (PubMed:30121242).</text>
</comment>
<comment type="subcellular location">
    <subcellularLocation>
        <location evidence="6">Nucleus</location>
    </subcellularLocation>
</comment>
<comment type="disruption phenotype">
    <text evidence="4">Blocks harzianum A production and reduces expression of the trichothecene biosynthesis genes, as well as of mevalonate biosynthetic genes required for synthesis of farnesyl diphosphate (FPP), the primary metabolite that feeds into trichothecene biosynthesis (PubMed:30121242). Leads to increased expression of 10 of 49 secondary metabolite (SM) biosynthetic gene clusters in T.arundinaceum and reduced expression of 5 SM biosynthetic gene clusters (PubMed:30121242).</text>
</comment>
<feature type="chain" id="PRO_0000445611" description="Trichothecene biosynthesis transcription regulator TRI6">
    <location>
        <begin position="1"/>
        <end position="218"/>
    </location>
</feature>
<feature type="zinc finger region" description="C2H2-type" evidence="1">
    <location>
        <begin position="185"/>
        <end position="215"/>
    </location>
</feature>
<feature type="region of interest" description="Disordered" evidence="2">
    <location>
        <begin position="154"/>
        <end position="181"/>
    </location>
</feature>
<feature type="compositionally biased region" description="Basic and acidic residues" evidence="2">
    <location>
        <begin position="162"/>
        <end position="176"/>
    </location>
</feature>
<proteinExistence type="predicted"/>
<accession>G0KYB3</accession>
<dbReference type="EMBL" id="FN394497">
    <property type="protein sequence ID" value="CAY87363.1"/>
    <property type="molecule type" value="Genomic_DNA"/>
</dbReference>
<dbReference type="OrthoDB" id="654211at2759"/>
<dbReference type="GO" id="GO:0005634">
    <property type="term" value="C:nucleus"/>
    <property type="evidence" value="ECO:0007669"/>
    <property type="project" value="UniProtKB-SubCell"/>
</dbReference>
<dbReference type="GO" id="GO:0008270">
    <property type="term" value="F:zinc ion binding"/>
    <property type="evidence" value="ECO:0007669"/>
    <property type="project" value="UniProtKB-KW"/>
</dbReference>
<dbReference type="InterPro" id="IPR013087">
    <property type="entry name" value="Znf_C2H2_type"/>
</dbReference>
<dbReference type="SMART" id="SM00355">
    <property type="entry name" value="ZnF_C2H2"/>
    <property type="match status" value="3"/>
</dbReference>
<dbReference type="PROSITE" id="PS50157">
    <property type="entry name" value="ZINC_FINGER_C2H2_2"/>
    <property type="match status" value="1"/>
</dbReference>
<keyword id="KW-0479">Metal-binding</keyword>
<keyword id="KW-0539">Nucleus</keyword>
<keyword id="KW-0804">Transcription</keyword>
<keyword id="KW-0805">Transcription regulation</keyword>
<keyword id="KW-0862">Zinc</keyword>
<keyword id="KW-0863">Zinc-finger</keyword>
<reference key="1">
    <citation type="journal article" date="2011" name="Appl. Environ. Microbiol.">
        <title>Identification of loci and functional characterization of trichothecene biosynthesis genes in filamentous fungi of the genus Trichoderma.</title>
        <authorList>
            <person name="Cardoza R.E."/>
            <person name="Malmierca M.G."/>
            <person name="Hermosa M.R."/>
            <person name="Alexander N.J."/>
            <person name="McCormick S.P."/>
            <person name="Proctor R.H."/>
            <person name="Tijerino A.M."/>
            <person name="Rumbero A."/>
            <person name="Monte E."/>
            <person name="Gutierrez S."/>
        </authorList>
    </citation>
    <scope>NUCLEOTIDE SEQUENCE [GENOMIC DNA]</scope>
    <scope>IDENTIFICATION</scope>
    <source>
        <strain>IBT 40837</strain>
    </source>
</reference>
<reference key="2">
    <citation type="journal article" date="2018" name="Fungal Genet. Biol.">
        <title>Effect of deletion of a trichothecene toxin regulatory gene on the secondary metabolism transcriptome of the saprotrophic fungus Trichoderma arundinaceum.</title>
        <authorList>
            <person name="Lindo L."/>
            <person name="McCormick S.P."/>
            <person name="Cardoza R.E."/>
            <person name="Brown D.W."/>
            <person name="Kim H.S."/>
            <person name="Alexander N.J."/>
            <person name="Proctor R.H."/>
            <person name="Gutierrez S."/>
        </authorList>
    </citation>
    <scope>FUNCTION</scope>
    <scope>DISRUPTION PHENOTYPE</scope>
</reference>
<organism>
    <name type="scientific">Trichoderma arundinaceum</name>
    <dbReference type="NCBI Taxonomy" id="490622"/>
    <lineage>
        <taxon>Eukaryota</taxon>
        <taxon>Fungi</taxon>
        <taxon>Dikarya</taxon>
        <taxon>Ascomycota</taxon>
        <taxon>Pezizomycotina</taxon>
        <taxon>Sordariomycetes</taxon>
        <taxon>Hypocreomycetidae</taxon>
        <taxon>Hypocreales</taxon>
        <taxon>Hypocreaceae</taxon>
        <taxon>Trichoderma</taxon>
    </lineage>
</organism>
<sequence>MNDDSETPGAEAWMALPLFNRKASPDHEQNVLTWFECWRPPEDDVSDFKSLEDYEDSPTHSIGSSGLHSGSLDSDYHYYTASDLVFSDDGGVGRNADLLSEISDDHIPQLSFSTPSTCPFPGCKSTALFTTGRDFRRHYRQHFKRFFCRYEECSQSTNDPGDAGKKGFATRKDRARHEAKHNPAIRCQWRDNNGDQCTRTFSRMDNMRDHFRRIHGKE</sequence>
<name>TRI6_TRIAR</name>
<gene>
    <name evidence="5" type="primary">TRI6</name>
</gene>
<evidence type="ECO:0000255" key="1">
    <source>
        <dbReference type="PROSITE-ProRule" id="PRU00042"/>
    </source>
</evidence>
<evidence type="ECO:0000256" key="2">
    <source>
        <dbReference type="SAM" id="MobiDB-lite"/>
    </source>
</evidence>
<evidence type="ECO:0000269" key="3">
    <source>
    </source>
</evidence>
<evidence type="ECO:0000269" key="4">
    <source>
    </source>
</evidence>
<evidence type="ECO:0000303" key="5">
    <source>
    </source>
</evidence>
<evidence type="ECO:0000305" key="6"/>
<protein>
    <recommendedName>
        <fullName evidence="5">Trichothecene biosynthesis transcription regulator TRI6</fullName>
    </recommendedName>
    <alternativeName>
        <fullName evidence="5">Trichothecene biosynthesis protein 6</fullName>
    </alternativeName>
</protein>